<feature type="chain" id="PRO_0000124168" description="Proteasome subunit alpha 1">
    <location>
        <begin position="1"/>
        <end position="260"/>
    </location>
</feature>
<feature type="region of interest" description="Disordered" evidence="2">
    <location>
        <begin position="237"/>
        <end position="260"/>
    </location>
</feature>
<feature type="compositionally biased region" description="Acidic residues" evidence="2">
    <location>
        <begin position="240"/>
        <end position="260"/>
    </location>
</feature>
<name>PSA1_HALMA</name>
<reference key="1">
    <citation type="journal article" date="2004" name="Genome Res.">
        <title>Genome sequence of Haloarcula marismortui: a halophilic archaeon from the Dead Sea.</title>
        <authorList>
            <person name="Baliga N.S."/>
            <person name="Bonneau R."/>
            <person name="Facciotti M.T."/>
            <person name="Pan M."/>
            <person name="Glusman G."/>
            <person name="Deutsch E.W."/>
            <person name="Shannon P."/>
            <person name="Chiu Y."/>
            <person name="Weng R.S."/>
            <person name="Gan R.R."/>
            <person name="Hung P."/>
            <person name="Date S.V."/>
            <person name="Marcotte E."/>
            <person name="Hood L."/>
            <person name="Ng W.V."/>
        </authorList>
    </citation>
    <scope>NUCLEOTIDE SEQUENCE [LARGE SCALE GENOMIC DNA]</scope>
    <source>
        <strain>ATCC 43049 / DSM 3752 / JCM 8966 / VKM B-1809</strain>
    </source>
</reference>
<comment type="function">
    <text evidence="1">Component of the proteasome core, a large protease complex with broad specificity involved in protein degradation.</text>
</comment>
<comment type="activity regulation">
    <text evidence="1">The formation of the proteasomal ATPase PAN-20S proteasome complex, via the docking of the C-termini of PAN into the intersubunit pockets in the alpha-rings, triggers opening of the gate for substrate entry. Interconversion between the open-gate and close-gate conformations leads to a dynamic regulation of the 20S proteasome proteolysis activity.</text>
</comment>
<comment type="subunit">
    <text evidence="1">The 20S proteasome core is composed of 14 alpha and 14 beta subunits that assemble into four stacked heptameric rings, resulting in a barrel-shaped structure. The two inner rings, each composed of seven catalytic beta subunits, are sandwiched by two outer rings, each composed of seven alpha subunits. The catalytic chamber with the active sites is on the inside of the barrel. Has a gated structure, the ends of the cylinder being occluded by the N-termini of the alpha-subunits. Is capped at one or both ends by the proteasome regulatory ATPase, PAN.</text>
</comment>
<comment type="subcellular location">
    <subcellularLocation>
        <location evidence="1">Cytoplasm</location>
    </subcellularLocation>
</comment>
<comment type="similarity">
    <text evidence="1">Belongs to the peptidase T1A family.</text>
</comment>
<keyword id="KW-0963">Cytoplasm</keyword>
<keyword id="KW-0647">Proteasome</keyword>
<keyword id="KW-1185">Reference proteome</keyword>
<sequence>MQGQNQQQAYDRGITIFSPDGRLYQVEYAREAVKRGTASIGVRTSDGVVLAVDKRIRSPLMERSSVEKIHKADDHIGIASAGHVADARQLIDFARRQAQVNQLRYGEPVGVETLTKEITDYIQQYTQVGGARPFGVALIIGGIVNGEPRLFETDPSGTPYEWKALAVGADRGDIRDYLEEHYDEGMDLDEGVDLALAALASVNDDELSPEGIGVATVDVETETFGQLTDEEKEAHLAEADLLDTGEDADDEAEDEDATEE</sequence>
<evidence type="ECO:0000255" key="1">
    <source>
        <dbReference type="HAMAP-Rule" id="MF_00289"/>
    </source>
</evidence>
<evidence type="ECO:0000256" key="2">
    <source>
        <dbReference type="SAM" id="MobiDB-lite"/>
    </source>
</evidence>
<gene>
    <name evidence="1" type="primary">psmA1</name>
    <name type="ordered locus">rrnAC1174</name>
</gene>
<organism>
    <name type="scientific">Haloarcula marismortui (strain ATCC 43049 / DSM 3752 / JCM 8966 / VKM B-1809)</name>
    <name type="common">Halobacterium marismortui</name>
    <dbReference type="NCBI Taxonomy" id="272569"/>
    <lineage>
        <taxon>Archaea</taxon>
        <taxon>Methanobacteriati</taxon>
        <taxon>Methanobacteriota</taxon>
        <taxon>Stenosarchaea group</taxon>
        <taxon>Halobacteria</taxon>
        <taxon>Halobacteriales</taxon>
        <taxon>Haloarculaceae</taxon>
        <taxon>Haloarcula</taxon>
    </lineage>
</organism>
<proteinExistence type="inferred from homology"/>
<accession>Q5V2X8</accession>
<protein>
    <recommendedName>
        <fullName evidence="1">Proteasome subunit alpha 1</fullName>
    </recommendedName>
    <alternativeName>
        <fullName evidence="1">20S proteasome alpha subunit 1</fullName>
    </alternativeName>
    <alternativeName>
        <fullName evidence="1">Proteasome core protein PsmA 1</fullName>
    </alternativeName>
</protein>
<dbReference type="EMBL" id="AY596297">
    <property type="protein sequence ID" value="AAV46124.1"/>
    <property type="molecule type" value="Genomic_DNA"/>
</dbReference>
<dbReference type="SMR" id="Q5V2X8"/>
<dbReference type="STRING" id="272569.rrnAC1174"/>
<dbReference type="PaxDb" id="272569-rrnAC1174"/>
<dbReference type="EnsemblBacteria" id="AAV46124">
    <property type="protein sequence ID" value="AAV46124"/>
    <property type="gene ID" value="rrnAC1174"/>
</dbReference>
<dbReference type="KEGG" id="hma:rrnAC1174"/>
<dbReference type="PATRIC" id="fig|272569.17.peg.1890"/>
<dbReference type="eggNOG" id="arCOG00971">
    <property type="taxonomic scope" value="Archaea"/>
</dbReference>
<dbReference type="HOGENOM" id="CLU_035750_4_1_2"/>
<dbReference type="Proteomes" id="UP000001169">
    <property type="component" value="Chromosome I"/>
</dbReference>
<dbReference type="GO" id="GO:0005737">
    <property type="term" value="C:cytoplasm"/>
    <property type="evidence" value="ECO:0007669"/>
    <property type="project" value="UniProtKB-SubCell"/>
</dbReference>
<dbReference type="GO" id="GO:0019773">
    <property type="term" value="C:proteasome core complex, alpha-subunit complex"/>
    <property type="evidence" value="ECO:0000250"/>
    <property type="project" value="UniProtKB"/>
</dbReference>
<dbReference type="GO" id="GO:0004298">
    <property type="term" value="F:threonine-type endopeptidase activity"/>
    <property type="evidence" value="ECO:0007669"/>
    <property type="project" value="InterPro"/>
</dbReference>
<dbReference type="GO" id="GO:0010498">
    <property type="term" value="P:proteasomal protein catabolic process"/>
    <property type="evidence" value="ECO:0007669"/>
    <property type="project" value="UniProtKB-UniRule"/>
</dbReference>
<dbReference type="GO" id="GO:0006511">
    <property type="term" value="P:ubiquitin-dependent protein catabolic process"/>
    <property type="evidence" value="ECO:0007669"/>
    <property type="project" value="InterPro"/>
</dbReference>
<dbReference type="CDD" id="cd03756">
    <property type="entry name" value="proteasome_alpha_archeal"/>
    <property type="match status" value="1"/>
</dbReference>
<dbReference type="FunFam" id="3.60.20.10:FF:000004">
    <property type="entry name" value="Proteasome subunit alpha type-4"/>
    <property type="match status" value="1"/>
</dbReference>
<dbReference type="Gene3D" id="3.60.20.10">
    <property type="entry name" value="Glutamine Phosphoribosylpyrophosphate, subunit 1, domain 1"/>
    <property type="match status" value="1"/>
</dbReference>
<dbReference type="HAMAP" id="MF_00289_A">
    <property type="entry name" value="Proteasome_A_A"/>
    <property type="match status" value="1"/>
</dbReference>
<dbReference type="InterPro" id="IPR029055">
    <property type="entry name" value="Ntn_hydrolases_N"/>
</dbReference>
<dbReference type="InterPro" id="IPR050115">
    <property type="entry name" value="Proteasome_alpha"/>
</dbReference>
<dbReference type="InterPro" id="IPR023332">
    <property type="entry name" value="Proteasome_alpha-type"/>
</dbReference>
<dbReference type="InterPro" id="IPR019982">
    <property type="entry name" value="Proteasome_asu_arc"/>
</dbReference>
<dbReference type="InterPro" id="IPR000426">
    <property type="entry name" value="Proteasome_asu_N"/>
</dbReference>
<dbReference type="InterPro" id="IPR001353">
    <property type="entry name" value="Proteasome_sua/b"/>
</dbReference>
<dbReference type="NCBIfam" id="TIGR03633">
    <property type="entry name" value="arc_protsome_A"/>
    <property type="match status" value="1"/>
</dbReference>
<dbReference type="NCBIfam" id="NF003075">
    <property type="entry name" value="PRK03996.1"/>
    <property type="match status" value="1"/>
</dbReference>
<dbReference type="PANTHER" id="PTHR11599">
    <property type="entry name" value="PROTEASOME SUBUNIT ALPHA/BETA"/>
    <property type="match status" value="1"/>
</dbReference>
<dbReference type="Pfam" id="PF00227">
    <property type="entry name" value="Proteasome"/>
    <property type="match status" value="1"/>
</dbReference>
<dbReference type="Pfam" id="PF10584">
    <property type="entry name" value="Proteasome_A_N"/>
    <property type="match status" value="1"/>
</dbReference>
<dbReference type="SMART" id="SM00948">
    <property type="entry name" value="Proteasome_A_N"/>
    <property type="match status" value="1"/>
</dbReference>
<dbReference type="SUPFAM" id="SSF56235">
    <property type="entry name" value="N-terminal nucleophile aminohydrolases (Ntn hydrolases)"/>
    <property type="match status" value="1"/>
</dbReference>
<dbReference type="PROSITE" id="PS00388">
    <property type="entry name" value="PROTEASOME_ALPHA_1"/>
    <property type="match status" value="1"/>
</dbReference>
<dbReference type="PROSITE" id="PS51475">
    <property type="entry name" value="PROTEASOME_ALPHA_2"/>
    <property type="match status" value="1"/>
</dbReference>